<keyword id="KW-0025">Alternative splicing</keyword>
<keyword id="KW-0963">Cytoplasm</keyword>
<keyword id="KW-1185">Reference proteome</keyword>
<keyword id="KW-0687">Ribonucleoprotein</keyword>
<keyword id="KW-0689">Ribosomal protein</keyword>
<evidence type="ECO:0000303" key="1">
    <source>
    </source>
</evidence>
<evidence type="ECO:0000305" key="2"/>
<proteinExistence type="evidence at transcript level"/>
<comment type="subcellular location">
    <subcellularLocation>
        <location>Cytoplasm</location>
    </subcellularLocation>
</comment>
<comment type="alternative products">
    <event type="alternative splicing"/>
    <isoform>
        <id>Q9FY64-1</id>
        <name>1</name>
        <sequence type="displayed"/>
    </isoform>
    <text>A number of isoforms are produced. According to EST sequences.</text>
</comment>
<comment type="similarity">
    <text evidence="2">Belongs to the universal ribosomal protein uS19 family.</text>
</comment>
<dbReference type="EMBL" id="AL391712">
    <property type="protein sequence ID" value="CAC05477.1"/>
    <property type="molecule type" value="Genomic_DNA"/>
</dbReference>
<dbReference type="EMBL" id="CP002688">
    <property type="protein sequence ID" value="AED91404.1"/>
    <property type="molecule type" value="Genomic_DNA"/>
</dbReference>
<dbReference type="EMBL" id="AY050966">
    <property type="protein sequence ID" value="AAK93643.1"/>
    <property type="molecule type" value="mRNA"/>
</dbReference>
<dbReference type="EMBL" id="AY096616">
    <property type="protein sequence ID" value="AAM20266.1"/>
    <property type="molecule type" value="mRNA"/>
</dbReference>
<dbReference type="EMBL" id="AY085630">
    <property type="protein sequence ID" value="AAM62851.1"/>
    <property type="molecule type" value="mRNA"/>
</dbReference>
<dbReference type="RefSeq" id="NP_196513.1">
    <molecule id="Q9FY64-1"/>
    <property type="nucleotide sequence ID" value="NM_120988.3"/>
</dbReference>
<dbReference type="SMR" id="Q9FY64"/>
<dbReference type="BioGRID" id="16088">
    <property type="interactions" value="89"/>
</dbReference>
<dbReference type="FunCoup" id="Q9FY64">
    <property type="interactions" value="3225"/>
</dbReference>
<dbReference type="IntAct" id="Q9FY64">
    <property type="interactions" value="1"/>
</dbReference>
<dbReference type="STRING" id="3702.Q9FY64"/>
<dbReference type="PaxDb" id="3702-AT5G09510.1"/>
<dbReference type="EnsemblPlants" id="AT5G09510.1">
    <molecule id="Q9FY64-1"/>
    <property type="protein sequence ID" value="AT5G09510.1"/>
    <property type="gene ID" value="AT5G09510"/>
</dbReference>
<dbReference type="GeneID" id="830810"/>
<dbReference type="Gramene" id="AT5G09510.1">
    <molecule id="Q9FY64-1"/>
    <property type="protein sequence ID" value="AT5G09510.1"/>
    <property type="gene ID" value="AT5G09510"/>
</dbReference>
<dbReference type="KEGG" id="ath:AT5G09510"/>
<dbReference type="Araport" id="AT5G09510"/>
<dbReference type="TAIR" id="AT5G09510"/>
<dbReference type="eggNOG" id="KOG0898">
    <property type="taxonomic scope" value="Eukaryota"/>
</dbReference>
<dbReference type="InParanoid" id="Q9FY64"/>
<dbReference type="PhylomeDB" id="Q9FY64"/>
<dbReference type="CD-CODE" id="4299E36E">
    <property type="entry name" value="Nucleolus"/>
</dbReference>
<dbReference type="PRO" id="PR:Q9FY64"/>
<dbReference type="Proteomes" id="UP000006548">
    <property type="component" value="Chromosome 5"/>
</dbReference>
<dbReference type="ExpressionAtlas" id="Q9FY64">
    <property type="expression patterns" value="baseline and differential"/>
</dbReference>
<dbReference type="GO" id="GO:0022626">
    <property type="term" value="C:cytosolic ribosome"/>
    <property type="evidence" value="ECO:0007005"/>
    <property type="project" value="TAIR"/>
</dbReference>
<dbReference type="GO" id="GO:0022627">
    <property type="term" value="C:cytosolic small ribosomal subunit"/>
    <property type="evidence" value="ECO:0007005"/>
    <property type="project" value="TAIR"/>
</dbReference>
<dbReference type="GO" id="GO:0005730">
    <property type="term" value="C:nucleolus"/>
    <property type="evidence" value="ECO:0007005"/>
    <property type="project" value="TAIR"/>
</dbReference>
<dbReference type="GO" id="GO:0000325">
    <property type="term" value="C:plant-type vacuole"/>
    <property type="evidence" value="ECO:0007005"/>
    <property type="project" value="TAIR"/>
</dbReference>
<dbReference type="GO" id="GO:0005886">
    <property type="term" value="C:plasma membrane"/>
    <property type="evidence" value="ECO:0007005"/>
    <property type="project" value="TAIR"/>
</dbReference>
<dbReference type="GO" id="GO:0009506">
    <property type="term" value="C:plasmodesma"/>
    <property type="evidence" value="ECO:0007005"/>
    <property type="project" value="TAIR"/>
</dbReference>
<dbReference type="GO" id="GO:0003729">
    <property type="term" value="F:mRNA binding"/>
    <property type="evidence" value="ECO:0000314"/>
    <property type="project" value="TAIR"/>
</dbReference>
<dbReference type="GO" id="GO:0003735">
    <property type="term" value="F:structural constituent of ribosome"/>
    <property type="evidence" value="ECO:0000314"/>
    <property type="project" value="CAFA"/>
</dbReference>
<dbReference type="GO" id="GO:0006412">
    <property type="term" value="P:translation"/>
    <property type="evidence" value="ECO:0007669"/>
    <property type="project" value="InterPro"/>
</dbReference>
<dbReference type="FunFam" id="3.30.860.10:FF:000002">
    <property type="entry name" value="40S ribosomal protein S15"/>
    <property type="match status" value="1"/>
</dbReference>
<dbReference type="Gene3D" id="3.30.860.10">
    <property type="entry name" value="30s Ribosomal Protein S19, Chain A"/>
    <property type="match status" value="1"/>
</dbReference>
<dbReference type="HAMAP" id="MF_00531">
    <property type="entry name" value="Ribosomal_uS19"/>
    <property type="match status" value="1"/>
</dbReference>
<dbReference type="InterPro" id="IPR002222">
    <property type="entry name" value="Ribosomal_uS19"/>
</dbReference>
<dbReference type="InterPro" id="IPR020934">
    <property type="entry name" value="Ribosomal_uS19_CS"/>
</dbReference>
<dbReference type="InterPro" id="IPR005713">
    <property type="entry name" value="Ribosomal_uS19_euk/arc"/>
</dbReference>
<dbReference type="InterPro" id="IPR023575">
    <property type="entry name" value="Ribosomal_uS19_SF"/>
</dbReference>
<dbReference type="NCBIfam" id="NF003121">
    <property type="entry name" value="PRK04038.1"/>
    <property type="match status" value="1"/>
</dbReference>
<dbReference type="NCBIfam" id="TIGR01025">
    <property type="entry name" value="uS19_arch"/>
    <property type="match status" value="1"/>
</dbReference>
<dbReference type="PANTHER" id="PTHR11880">
    <property type="entry name" value="RIBOSOMAL PROTEIN S19P FAMILY MEMBER"/>
    <property type="match status" value="1"/>
</dbReference>
<dbReference type="PANTHER" id="PTHR11880:SF53">
    <property type="entry name" value="SMALL RIBOSOMAL SUBUNIT PROTEIN US19U-RELATED"/>
    <property type="match status" value="1"/>
</dbReference>
<dbReference type="Pfam" id="PF00203">
    <property type="entry name" value="Ribosomal_S19"/>
    <property type="match status" value="1"/>
</dbReference>
<dbReference type="PIRSF" id="PIRSF002144">
    <property type="entry name" value="Ribosomal_S19"/>
    <property type="match status" value="1"/>
</dbReference>
<dbReference type="PRINTS" id="PR00975">
    <property type="entry name" value="RIBOSOMALS19"/>
</dbReference>
<dbReference type="SUPFAM" id="SSF54570">
    <property type="entry name" value="Ribosomal protein S19"/>
    <property type="match status" value="1"/>
</dbReference>
<dbReference type="PROSITE" id="PS00323">
    <property type="entry name" value="RIBOSOMAL_S19"/>
    <property type="match status" value="1"/>
</dbReference>
<reference key="1">
    <citation type="journal article" date="2000" name="Nature">
        <title>Sequence and analysis of chromosome 5 of the plant Arabidopsis thaliana.</title>
        <authorList>
            <person name="Tabata S."/>
            <person name="Kaneko T."/>
            <person name="Nakamura Y."/>
            <person name="Kotani H."/>
            <person name="Kato T."/>
            <person name="Asamizu E."/>
            <person name="Miyajima N."/>
            <person name="Sasamoto S."/>
            <person name="Kimura T."/>
            <person name="Hosouchi T."/>
            <person name="Kawashima K."/>
            <person name="Kohara M."/>
            <person name="Matsumoto M."/>
            <person name="Matsuno A."/>
            <person name="Muraki A."/>
            <person name="Nakayama S."/>
            <person name="Nakazaki N."/>
            <person name="Naruo K."/>
            <person name="Okumura S."/>
            <person name="Shinpo S."/>
            <person name="Takeuchi C."/>
            <person name="Wada T."/>
            <person name="Watanabe A."/>
            <person name="Yamada M."/>
            <person name="Yasuda M."/>
            <person name="Sato S."/>
            <person name="de la Bastide M."/>
            <person name="Huang E."/>
            <person name="Spiegel L."/>
            <person name="Gnoj L."/>
            <person name="O'Shaughnessy A."/>
            <person name="Preston R."/>
            <person name="Habermann K."/>
            <person name="Murray J."/>
            <person name="Johnson D."/>
            <person name="Rohlfing T."/>
            <person name="Nelson J."/>
            <person name="Stoneking T."/>
            <person name="Pepin K."/>
            <person name="Spieth J."/>
            <person name="Sekhon M."/>
            <person name="Armstrong J."/>
            <person name="Becker M."/>
            <person name="Belter E."/>
            <person name="Cordum H."/>
            <person name="Cordes M."/>
            <person name="Courtney L."/>
            <person name="Courtney W."/>
            <person name="Dante M."/>
            <person name="Du H."/>
            <person name="Edwards J."/>
            <person name="Fryman J."/>
            <person name="Haakensen B."/>
            <person name="Lamar E."/>
            <person name="Latreille P."/>
            <person name="Leonard S."/>
            <person name="Meyer R."/>
            <person name="Mulvaney E."/>
            <person name="Ozersky P."/>
            <person name="Riley A."/>
            <person name="Strowmatt C."/>
            <person name="Wagner-McPherson C."/>
            <person name="Wollam A."/>
            <person name="Yoakum M."/>
            <person name="Bell M."/>
            <person name="Dedhia N."/>
            <person name="Parnell L."/>
            <person name="Shah R."/>
            <person name="Rodriguez M."/>
            <person name="Hoon See L."/>
            <person name="Vil D."/>
            <person name="Baker J."/>
            <person name="Kirchoff K."/>
            <person name="Toth K."/>
            <person name="King L."/>
            <person name="Bahret A."/>
            <person name="Miller B."/>
            <person name="Marra M.A."/>
            <person name="Martienssen R."/>
            <person name="McCombie W.R."/>
            <person name="Wilson R.K."/>
            <person name="Murphy G."/>
            <person name="Bancroft I."/>
            <person name="Volckaert G."/>
            <person name="Wambutt R."/>
            <person name="Duesterhoeft A."/>
            <person name="Stiekema W."/>
            <person name="Pohl T."/>
            <person name="Entian K.-D."/>
            <person name="Terryn N."/>
            <person name="Hartley N."/>
            <person name="Bent E."/>
            <person name="Johnson S."/>
            <person name="Langham S.-A."/>
            <person name="McCullagh B."/>
            <person name="Robben J."/>
            <person name="Grymonprez B."/>
            <person name="Zimmermann W."/>
            <person name="Ramsperger U."/>
            <person name="Wedler H."/>
            <person name="Balke K."/>
            <person name="Wedler E."/>
            <person name="Peters S."/>
            <person name="van Staveren M."/>
            <person name="Dirkse W."/>
            <person name="Mooijman P."/>
            <person name="Klein Lankhorst R."/>
            <person name="Weitzenegger T."/>
            <person name="Bothe G."/>
            <person name="Rose M."/>
            <person name="Hauf J."/>
            <person name="Berneiser S."/>
            <person name="Hempel S."/>
            <person name="Feldpausch M."/>
            <person name="Lamberth S."/>
            <person name="Villarroel R."/>
            <person name="Gielen J."/>
            <person name="Ardiles W."/>
            <person name="Bents O."/>
            <person name="Lemcke K."/>
            <person name="Kolesov G."/>
            <person name="Mayer K.F.X."/>
            <person name="Rudd S."/>
            <person name="Schoof H."/>
            <person name="Schueller C."/>
            <person name="Zaccaria P."/>
            <person name="Mewes H.-W."/>
            <person name="Bevan M."/>
            <person name="Fransz P.F."/>
        </authorList>
    </citation>
    <scope>NUCLEOTIDE SEQUENCE [LARGE SCALE GENOMIC DNA]</scope>
    <source>
        <strain>cv. Columbia</strain>
    </source>
</reference>
<reference key="2">
    <citation type="journal article" date="2017" name="Plant J.">
        <title>Araport11: a complete reannotation of the Arabidopsis thaliana reference genome.</title>
        <authorList>
            <person name="Cheng C.Y."/>
            <person name="Krishnakumar V."/>
            <person name="Chan A.P."/>
            <person name="Thibaud-Nissen F."/>
            <person name="Schobel S."/>
            <person name="Town C.D."/>
        </authorList>
    </citation>
    <scope>GENOME REANNOTATION</scope>
    <source>
        <strain>cv. Columbia</strain>
    </source>
</reference>
<reference key="3">
    <citation type="journal article" date="2003" name="Science">
        <title>Empirical analysis of transcriptional activity in the Arabidopsis genome.</title>
        <authorList>
            <person name="Yamada K."/>
            <person name="Lim J."/>
            <person name="Dale J.M."/>
            <person name="Chen H."/>
            <person name="Shinn P."/>
            <person name="Palm C.J."/>
            <person name="Southwick A.M."/>
            <person name="Wu H.C."/>
            <person name="Kim C.J."/>
            <person name="Nguyen M."/>
            <person name="Pham P.K."/>
            <person name="Cheuk R.F."/>
            <person name="Karlin-Newmann G."/>
            <person name="Liu S.X."/>
            <person name="Lam B."/>
            <person name="Sakano H."/>
            <person name="Wu T."/>
            <person name="Yu G."/>
            <person name="Miranda M."/>
            <person name="Quach H.L."/>
            <person name="Tripp M."/>
            <person name="Chang C.H."/>
            <person name="Lee J.M."/>
            <person name="Toriumi M.J."/>
            <person name="Chan M.M."/>
            <person name="Tang C.C."/>
            <person name="Onodera C.S."/>
            <person name="Deng J.M."/>
            <person name="Akiyama K."/>
            <person name="Ansari Y."/>
            <person name="Arakawa T."/>
            <person name="Banh J."/>
            <person name="Banno F."/>
            <person name="Bowser L."/>
            <person name="Brooks S.Y."/>
            <person name="Carninci P."/>
            <person name="Chao Q."/>
            <person name="Choy N."/>
            <person name="Enju A."/>
            <person name="Goldsmith A.D."/>
            <person name="Gurjal M."/>
            <person name="Hansen N.F."/>
            <person name="Hayashizaki Y."/>
            <person name="Johnson-Hopson C."/>
            <person name="Hsuan V.W."/>
            <person name="Iida K."/>
            <person name="Karnes M."/>
            <person name="Khan S."/>
            <person name="Koesema E."/>
            <person name="Ishida J."/>
            <person name="Jiang P.X."/>
            <person name="Jones T."/>
            <person name="Kawai J."/>
            <person name="Kamiya A."/>
            <person name="Meyers C."/>
            <person name="Nakajima M."/>
            <person name="Narusaka M."/>
            <person name="Seki M."/>
            <person name="Sakurai T."/>
            <person name="Satou M."/>
            <person name="Tamse R."/>
            <person name="Vaysberg M."/>
            <person name="Wallender E.K."/>
            <person name="Wong C."/>
            <person name="Yamamura Y."/>
            <person name="Yuan S."/>
            <person name="Shinozaki K."/>
            <person name="Davis R.W."/>
            <person name="Theologis A."/>
            <person name="Ecker J.R."/>
        </authorList>
    </citation>
    <scope>NUCLEOTIDE SEQUENCE [LARGE SCALE MRNA]</scope>
    <source>
        <strain>cv. Columbia</strain>
    </source>
</reference>
<reference key="4">
    <citation type="submission" date="2002-03" db="EMBL/GenBank/DDBJ databases">
        <title>Full-length cDNA from Arabidopsis thaliana.</title>
        <authorList>
            <person name="Brover V.V."/>
            <person name="Troukhan M.E."/>
            <person name="Alexandrov N.A."/>
            <person name="Lu Y.-P."/>
            <person name="Flavell R.B."/>
            <person name="Feldmann K.A."/>
        </authorList>
    </citation>
    <scope>NUCLEOTIDE SEQUENCE [LARGE SCALE MRNA]</scope>
</reference>
<reference key="5">
    <citation type="journal article" date="2001" name="Plant Physiol.">
        <title>The organization of cytoplasmic ribosomal protein genes in the Arabidopsis genome.</title>
        <authorList>
            <person name="Barakat A."/>
            <person name="Szick-Miranda K."/>
            <person name="Chang I.-F."/>
            <person name="Guyot R."/>
            <person name="Blanc G."/>
            <person name="Cooke R."/>
            <person name="Delseny M."/>
            <person name="Bailey-Serres J."/>
        </authorList>
    </citation>
    <scope>GENE FAMILY ORGANIZATION</scope>
    <scope>NOMENCLATURE</scope>
</reference>
<reference key="6">
    <citation type="journal article" date="2023" name="Plant Cell">
        <title>An updated nomenclature for plant ribosomal protein genes.</title>
        <authorList>
            <person name="Scarpin M.R."/>
            <person name="Busche M."/>
            <person name="Martinez R.E."/>
            <person name="Harper L.C."/>
            <person name="Reiser L."/>
            <person name="Szakonyi D."/>
            <person name="Merchante C."/>
            <person name="Lan T."/>
            <person name="Xiong W."/>
            <person name="Mo B."/>
            <person name="Tang G."/>
            <person name="Chen X."/>
            <person name="Bailey-Serres J."/>
            <person name="Browning K.S."/>
            <person name="Brunkard J.O."/>
        </authorList>
    </citation>
    <scope>NOMENCLATURE</scope>
</reference>
<accession>Q9FY64</accession>
<name>RS154_ARATH</name>
<feature type="chain" id="PRO_0000130042" description="Small ribosomal subunit protein uS19x">
    <location>
        <begin position="1"/>
        <end position="152"/>
    </location>
</feature>
<gene>
    <name type="primary">RPS15D</name>
    <name type="ordered locus">At5g09510</name>
    <name type="ORF">T5E8_310</name>
</gene>
<organism>
    <name type="scientific">Arabidopsis thaliana</name>
    <name type="common">Mouse-ear cress</name>
    <dbReference type="NCBI Taxonomy" id="3702"/>
    <lineage>
        <taxon>Eukaryota</taxon>
        <taxon>Viridiplantae</taxon>
        <taxon>Streptophyta</taxon>
        <taxon>Embryophyta</taxon>
        <taxon>Tracheophyta</taxon>
        <taxon>Spermatophyta</taxon>
        <taxon>Magnoliopsida</taxon>
        <taxon>eudicotyledons</taxon>
        <taxon>Gunneridae</taxon>
        <taxon>Pentapetalae</taxon>
        <taxon>rosids</taxon>
        <taxon>malvids</taxon>
        <taxon>Brassicales</taxon>
        <taxon>Brassicaceae</taxon>
        <taxon>Camelineae</taxon>
        <taxon>Arabidopsis</taxon>
    </lineage>
</organism>
<sequence>MADVEPEVAAAGVPKKRTFKKFAFKGVDLDALLDMSTDDLVKLFSSRIRRRFSRGLTRKPMALIKKLRKAKREAPAGEKPEPVRTHLRNMIIVPEMIGSIIGVYNGKTFNQVEIKPEMIGHYLAEFSISYKPVKHGRPGVGATHSSRFIPLK</sequence>
<protein>
    <recommendedName>
        <fullName evidence="1">Small ribosomal subunit protein uS19x</fullName>
    </recommendedName>
    <alternativeName>
        <fullName>40S ribosomal protein S15-4</fullName>
    </alternativeName>
</protein>